<evidence type="ECO:0000250" key="1"/>
<evidence type="ECO:0000255" key="2">
    <source>
        <dbReference type="PROSITE-ProRule" id="PRU00117"/>
    </source>
</evidence>
<evidence type="ECO:0000269" key="3">
    <source>
    </source>
</evidence>
<evidence type="ECO:0000305" key="4"/>
<feature type="chain" id="PRO_0000050095" description="Poly(rC)-binding protein 4">
    <location>
        <begin position="1"/>
        <end position="403"/>
    </location>
</feature>
<feature type="domain" description="KH 1" evidence="2">
    <location>
        <begin position="17"/>
        <end position="67"/>
    </location>
</feature>
<feature type="domain" description="KH 2" evidence="2">
    <location>
        <begin position="101"/>
        <end position="154"/>
    </location>
</feature>
<feature type="domain" description="KH 3" evidence="2">
    <location>
        <begin position="241"/>
        <end position="293"/>
    </location>
</feature>
<feature type="sequence conflict" description="In Ref. 2; AAH10694." evidence="4" ref="2">
    <original>M</original>
    <variation>L</variation>
    <location>
        <position position="235"/>
    </location>
</feature>
<gene>
    <name type="primary">Pcbp4</name>
</gene>
<reference key="1">
    <citation type="journal article" date="2000" name="Genomics">
        <title>Identification of two novel mammalian genes establishes a subfamily of KH-domain RNA-binding proteins.</title>
        <authorList>
            <person name="Makeyev A.V."/>
            <person name="Liebhaber S.A."/>
        </authorList>
    </citation>
    <scope>NUCLEOTIDE SEQUENCE [MRNA]</scope>
    <scope>TISSUE SPECIFICITY</scope>
</reference>
<reference key="2">
    <citation type="journal article" date="2004" name="Genome Res.">
        <title>The status, quality, and expansion of the NIH full-length cDNA project: the Mammalian Gene Collection (MGC).</title>
        <authorList>
            <consortium name="The MGC Project Team"/>
        </authorList>
    </citation>
    <scope>NUCLEOTIDE SEQUENCE [LARGE SCALE MRNA]</scope>
    <source>
        <tissue>Mammary tumor</tissue>
    </source>
</reference>
<reference key="3">
    <citation type="journal article" date="2010" name="Cell">
        <title>A tissue-specific atlas of mouse protein phosphorylation and expression.</title>
        <authorList>
            <person name="Huttlin E.L."/>
            <person name="Jedrychowski M.P."/>
            <person name="Elias J.E."/>
            <person name="Goswami T."/>
            <person name="Rad R."/>
            <person name="Beausoleil S.A."/>
            <person name="Villen J."/>
            <person name="Haas W."/>
            <person name="Sowa M.E."/>
            <person name="Gygi S.P."/>
        </authorList>
    </citation>
    <scope>IDENTIFICATION BY MASS SPECTROMETRY [LARGE SCALE ANALYSIS]</scope>
    <source>
        <tissue>Brain</tissue>
    </source>
</reference>
<comment type="function">
    <text evidence="1">Single-stranded nucleic acid binding protein that binds preferentially to oligo dC.</text>
</comment>
<comment type="subcellular location">
    <subcellularLocation>
        <location evidence="1">Cytoplasm</location>
    </subcellularLocation>
</comment>
<comment type="tissue specificity">
    <text evidence="3">Widely expressed, with highest levels in testis and lowest in heart.</text>
</comment>
<organism>
    <name type="scientific">Mus musculus</name>
    <name type="common">Mouse</name>
    <dbReference type="NCBI Taxonomy" id="10090"/>
    <lineage>
        <taxon>Eukaryota</taxon>
        <taxon>Metazoa</taxon>
        <taxon>Chordata</taxon>
        <taxon>Craniata</taxon>
        <taxon>Vertebrata</taxon>
        <taxon>Euteleostomi</taxon>
        <taxon>Mammalia</taxon>
        <taxon>Eutheria</taxon>
        <taxon>Euarchontoglires</taxon>
        <taxon>Glires</taxon>
        <taxon>Rodentia</taxon>
        <taxon>Myomorpha</taxon>
        <taxon>Muroidea</taxon>
        <taxon>Muridae</taxon>
        <taxon>Murinae</taxon>
        <taxon>Mus</taxon>
        <taxon>Mus</taxon>
    </lineage>
</organism>
<sequence>MSSSDAGLEEGPELSITLTLRMLMHGKEVGSIIGKKGETVKRIREQSSARITISEGSCPERITTITGSTAAVFHAVSMIAFKLDEDLCAAPANGGSVSRPPVTLRLVIPASQCGSLIGKAGTKIKEIRETTGAQVQVAGDLLPNSTERAVTVSGVPDAIILCVRQICAVILESPPKGATIPYHPSLSLGTVLLSANQGFSVQGQYGAVTPAEVTKLQQLSGHAVPFASPSVVPGMDPSTQTSSQEFLVPNDLIGCVIGRQGSKISEIRQMSGAHIKIGNQAEGAGERHVTITGSPVSIALAQYLITACLETAKSTSGGTPGSAPADLPTPFSPPLTALPTAPPGLLGTPYAISLSNFIGLKPVPFLALPPASPGPPPGLAAYTAKMAAANGSKKAERQKFSPY</sequence>
<accession>P57724</accession>
<accession>Q91VR3</accession>
<proteinExistence type="evidence at protein level"/>
<keyword id="KW-0963">Cytoplasm</keyword>
<keyword id="KW-0238">DNA-binding</keyword>
<keyword id="KW-1185">Reference proteome</keyword>
<keyword id="KW-0677">Repeat</keyword>
<keyword id="KW-0687">Ribonucleoprotein</keyword>
<keyword id="KW-0694">RNA-binding</keyword>
<dbReference type="EMBL" id="AF176328">
    <property type="protein sequence ID" value="AAG09239.1"/>
    <property type="molecule type" value="mRNA"/>
</dbReference>
<dbReference type="EMBL" id="BC010694">
    <property type="protein sequence ID" value="AAH10694.1"/>
    <property type="molecule type" value="mRNA"/>
</dbReference>
<dbReference type="CCDS" id="CCDS23479.1"/>
<dbReference type="RefSeq" id="NP_067542.3">
    <property type="nucleotide sequence ID" value="NM_021567.5"/>
</dbReference>
<dbReference type="RefSeq" id="XP_006511842.1">
    <property type="nucleotide sequence ID" value="XM_006511779.3"/>
</dbReference>
<dbReference type="RefSeq" id="XP_006511843.1">
    <property type="nucleotide sequence ID" value="XM_006511780.1"/>
</dbReference>
<dbReference type="SMR" id="P57724"/>
<dbReference type="BioGRID" id="208527">
    <property type="interactions" value="3"/>
</dbReference>
<dbReference type="FunCoup" id="P57724">
    <property type="interactions" value="1726"/>
</dbReference>
<dbReference type="STRING" id="10090.ENSMUSP00000024260"/>
<dbReference type="GlyGen" id="P57724">
    <property type="glycosylation" value="2 sites"/>
</dbReference>
<dbReference type="iPTMnet" id="P57724"/>
<dbReference type="PhosphoSitePlus" id="P57724"/>
<dbReference type="SwissPalm" id="P57724"/>
<dbReference type="PaxDb" id="10090-ENSMUSP00000024260"/>
<dbReference type="PeptideAtlas" id="P57724"/>
<dbReference type="ProteomicsDB" id="287799"/>
<dbReference type="Pumba" id="P57724"/>
<dbReference type="DNASU" id="59092"/>
<dbReference type="GeneID" id="59092"/>
<dbReference type="KEGG" id="mmu:59092"/>
<dbReference type="UCSC" id="uc009rjt.3">
    <property type="organism name" value="mouse"/>
</dbReference>
<dbReference type="AGR" id="MGI:1890471"/>
<dbReference type="CTD" id="57060"/>
<dbReference type="MGI" id="MGI:1890471">
    <property type="gene designation" value="Pcbp4"/>
</dbReference>
<dbReference type="eggNOG" id="KOG2190">
    <property type="taxonomic scope" value="Eukaryota"/>
</dbReference>
<dbReference type="InParanoid" id="P57724"/>
<dbReference type="OrthoDB" id="442947at2759"/>
<dbReference type="PhylomeDB" id="P57724"/>
<dbReference type="TreeFam" id="TF318292"/>
<dbReference type="BioGRID-ORCS" id="59092">
    <property type="hits" value="2 hits in 79 CRISPR screens"/>
</dbReference>
<dbReference type="ChiTaRS" id="Pcbp4">
    <property type="organism name" value="mouse"/>
</dbReference>
<dbReference type="PRO" id="PR:P57724"/>
<dbReference type="Proteomes" id="UP000000589">
    <property type="component" value="Unplaced"/>
</dbReference>
<dbReference type="RNAct" id="P57724">
    <property type="molecule type" value="protein"/>
</dbReference>
<dbReference type="GO" id="GO:0005737">
    <property type="term" value="C:cytoplasm"/>
    <property type="evidence" value="ECO:0007669"/>
    <property type="project" value="UniProtKB-SubCell"/>
</dbReference>
<dbReference type="GO" id="GO:1990904">
    <property type="term" value="C:ribonucleoprotein complex"/>
    <property type="evidence" value="ECO:0007669"/>
    <property type="project" value="UniProtKB-KW"/>
</dbReference>
<dbReference type="GO" id="GO:0003677">
    <property type="term" value="F:DNA binding"/>
    <property type="evidence" value="ECO:0007669"/>
    <property type="project" value="UniProtKB-KW"/>
</dbReference>
<dbReference type="GO" id="GO:0003730">
    <property type="term" value="F:mRNA 3'-UTR binding"/>
    <property type="evidence" value="ECO:0000266"/>
    <property type="project" value="MGI"/>
</dbReference>
<dbReference type="GO" id="GO:0043518">
    <property type="term" value="P:negative regulation of DNA damage response, signal transduction by p53 class mediator"/>
    <property type="evidence" value="ECO:0000315"/>
    <property type="project" value="MGI"/>
</dbReference>
<dbReference type="GO" id="GO:0048025">
    <property type="term" value="P:negative regulation of mRNA splicing, via spliceosome"/>
    <property type="evidence" value="ECO:0000315"/>
    <property type="project" value="MGI"/>
</dbReference>
<dbReference type="GO" id="GO:0043488">
    <property type="term" value="P:regulation of mRNA stability"/>
    <property type="evidence" value="ECO:0000266"/>
    <property type="project" value="MGI"/>
</dbReference>
<dbReference type="CDD" id="cd22517">
    <property type="entry name" value="KH-I_PCBP4_rpt1"/>
    <property type="match status" value="1"/>
</dbReference>
<dbReference type="CDD" id="cd22520">
    <property type="entry name" value="KH-I_PCBP4_rpt2"/>
    <property type="match status" value="1"/>
</dbReference>
<dbReference type="CDD" id="cd22523">
    <property type="entry name" value="KH-I_PCBP4_rpt3"/>
    <property type="match status" value="1"/>
</dbReference>
<dbReference type="FunFam" id="3.30.1370.10:FF:000002">
    <property type="entry name" value="poly(RC)-binding protein 2 isoform X1"/>
    <property type="match status" value="1"/>
</dbReference>
<dbReference type="FunFam" id="3.30.1370.10:FF:000005">
    <property type="entry name" value="poly(RC)-binding protein 2 isoform X1"/>
    <property type="match status" value="1"/>
</dbReference>
<dbReference type="FunFam" id="3.30.1370.10:FF:000058">
    <property type="entry name" value="poly(RC)-binding protein 4 isoform X1"/>
    <property type="match status" value="1"/>
</dbReference>
<dbReference type="Gene3D" id="3.30.1370.10">
    <property type="entry name" value="K Homology domain, type 1"/>
    <property type="match status" value="3"/>
</dbReference>
<dbReference type="InterPro" id="IPR004087">
    <property type="entry name" value="KH_dom"/>
</dbReference>
<dbReference type="InterPro" id="IPR004088">
    <property type="entry name" value="KH_dom_type_1"/>
</dbReference>
<dbReference type="InterPro" id="IPR036612">
    <property type="entry name" value="KH_dom_type_1_sf"/>
</dbReference>
<dbReference type="PANTHER" id="PTHR10288">
    <property type="entry name" value="KH DOMAIN CONTAINING RNA BINDING PROTEIN"/>
    <property type="match status" value="1"/>
</dbReference>
<dbReference type="Pfam" id="PF00013">
    <property type="entry name" value="KH_1"/>
    <property type="match status" value="3"/>
</dbReference>
<dbReference type="SMART" id="SM00322">
    <property type="entry name" value="KH"/>
    <property type="match status" value="3"/>
</dbReference>
<dbReference type="SUPFAM" id="SSF54791">
    <property type="entry name" value="Eukaryotic type KH-domain (KH-domain type I)"/>
    <property type="match status" value="3"/>
</dbReference>
<dbReference type="PROSITE" id="PS50084">
    <property type="entry name" value="KH_TYPE_1"/>
    <property type="match status" value="3"/>
</dbReference>
<protein>
    <recommendedName>
        <fullName>Poly(rC)-binding protein 4</fullName>
    </recommendedName>
    <alternativeName>
        <fullName>Alpha-CP4</fullName>
    </alternativeName>
</protein>
<name>PCBP4_MOUSE</name>